<reference key="1">
    <citation type="journal article" date="1985" name="J. Mol. Evol.">
        <title>Evolution of two actin genes in the sea urchin Strongylocentrotus franciscanus.</title>
        <authorList>
            <person name="Foran D.R."/>
            <person name="Johnson P.J."/>
            <person name="Moore G.P."/>
        </authorList>
    </citation>
    <scope>NUCLEOTIDE SEQUENCE [GENOMIC DNA]</scope>
</reference>
<name>ACT1_MESFR</name>
<dbReference type="EC" id="3.6.4.-" evidence="2"/>
<dbReference type="EMBL" id="X03075">
    <property type="protein sequence ID" value="CAA26877.1"/>
    <property type="molecule type" value="Genomic_DNA"/>
</dbReference>
<dbReference type="PIR" id="S07288">
    <property type="entry name" value="S07288"/>
</dbReference>
<dbReference type="SMR" id="P10990"/>
<dbReference type="GO" id="GO:0005737">
    <property type="term" value="C:cytoplasm"/>
    <property type="evidence" value="ECO:0007669"/>
    <property type="project" value="UniProtKB-KW"/>
</dbReference>
<dbReference type="GO" id="GO:0005856">
    <property type="term" value="C:cytoskeleton"/>
    <property type="evidence" value="ECO:0007669"/>
    <property type="project" value="UniProtKB-SubCell"/>
</dbReference>
<dbReference type="GO" id="GO:0005524">
    <property type="term" value="F:ATP binding"/>
    <property type="evidence" value="ECO:0007669"/>
    <property type="project" value="UniProtKB-KW"/>
</dbReference>
<dbReference type="GO" id="GO:0016787">
    <property type="term" value="F:hydrolase activity"/>
    <property type="evidence" value="ECO:0007669"/>
    <property type="project" value="UniProtKB-KW"/>
</dbReference>
<dbReference type="CDD" id="cd10224">
    <property type="entry name" value="ASKHA_NBD_actin"/>
    <property type="match status" value="1"/>
</dbReference>
<dbReference type="FunFam" id="2.30.36.70:FF:000001">
    <property type="entry name" value="Actin, alpha skeletal muscle"/>
    <property type="match status" value="1"/>
</dbReference>
<dbReference type="FunFam" id="3.30.420.40:FF:000131">
    <property type="entry name" value="Actin, alpha skeletal muscle"/>
    <property type="match status" value="1"/>
</dbReference>
<dbReference type="FunFam" id="3.30.420.40:FF:000291">
    <property type="entry name" value="Actin, alpha skeletal muscle"/>
    <property type="match status" value="1"/>
</dbReference>
<dbReference type="FunFam" id="3.90.640.10:FF:000047">
    <property type="entry name" value="Actin, alpha skeletal muscle"/>
    <property type="match status" value="1"/>
</dbReference>
<dbReference type="FunFam" id="3.30.420.40:FF:000058">
    <property type="entry name" value="Putative actin-related protein 5"/>
    <property type="match status" value="1"/>
</dbReference>
<dbReference type="Gene3D" id="3.30.420.40">
    <property type="match status" value="2"/>
</dbReference>
<dbReference type="Gene3D" id="3.90.640.10">
    <property type="entry name" value="Actin, Chain A, domain 4"/>
    <property type="match status" value="1"/>
</dbReference>
<dbReference type="InterPro" id="IPR004000">
    <property type="entry name" value="Actin"/>
</dbReference>
<dbReference type="InterPro" id="IPR020902">
    <property type="entry name" value="Actin/actin-like_CS"/>
</dbReference>
<dbReference type="InterPro" id="IPR004001">
    <property type="entry name" value="Actin_CS"/>
</dbReference>
<dbReference type="InterPro" id="IPR043129">
    <property type="entry name" value="ATPase_NBD"/>
</dbReference>
<dbReference type="PANTHER" id="PTHR11937">
    <property type="entry name" value="ACTIN"/>
    <property type="match status" value="1"/>
</dbReference>
<dbReference type="Pfam" id="PF00022">
    <property type="entry name" value="Actin"/>
    <property type="match status" value="1"/>
</dbReference>
<dbReference type="PRINTS" id="PR00190">
    <property type="entry name" value="ACTIN"/>
</dbReference>
<dbReference type="SMART" id="SM00268">
    <property type="entry name" value="ACTIN"/>
    <property type="match status" value="1"/>
</dbReference>
<dbReference type="SUPFAM" id="SSF53067">
    <property type="entry name" value="Actin-like ATPase domain"/>
    <property type="match status" value="2"/>
</dbReference>
<dbReference type="PROSITE" id="PS00406">
    <property type="entry name" value="ACTINS_1"/>
    <property type="match status" value="1"/>
</dbReference>
<dbReference type="PROSITE" id="PS00432">
    <property type="entry name" value="ACTINS_2"/>
    <property type="match status" value="1"/>
</dbReference>
<dbReference type="PROSITE" id="PS01132">
    <property type="entry name" value="ACTINS_ACT_LIKE"/>
    <property type="match status" value="1"/>
</dbReference>
<protein>
    <recommendedName>
        <fullName>Actin-15A</fullName>
        <ecNumber evidence="2">3.6.4.-</ecNumber>
    </recommendedName>
</protein>
<feature type="propeptide" id="PRO_0000000718" description="Removed in mature form">
    <location>
        <begin position="1"/>
        <end position="2"/>
    </location>
</feature>
<feature type="chain" id="PRO_0000000719" description="Actin-15A">
    <location>
        <begin position="3"/>
        <end position="376"/>
    </location>
</feature>
<feature type="modified residue" description="N-acetylaspartate" evidence="1">
    <location>
        <position position="3"/>
    </location>
</feature>
<accession>P10990</accession>
<sequence length="376" mass="41827">MCDDDVAALVIDNGSGMVKAGFAGDDAPRAVFPSIVGRPRHQGVMVGMGQKDSYVGDEAQSKRGILTLKYPIEHGIVTNWDDMEKIWHHTFYNELRVAPEEHPVLLTEAPLNPKANREKMTQIMFETFNSPAMYVAIQAVLSLYASGRTTGIVFDSGDGVSHTVPIYEGYALPHAILRLDLAGRDLTDYLMKILTERGYSFTTTAEREIVRDIKEKLCYVALDFEQEMQTAASSSSLEKSYELPDGQVITIGNERFRAPEALFQPPFLGMESAGIHETCYNSIMKCDVDIRKDLYANCVLSGGSTMFPGIADRMQKEITALAPPTMKIKIIAPPERKYSVWIGGSILASLSTFQQMWISKQEYDESGPSIVHRKCF</sequence>
<comment type="function">
    <text>Actins are highly conserved proteins that are involved in various types of cell motility and are ubiquitously expressed in all eukaryotic cells.</text>
</comment>
<comment type="catalytic activity">
    <reaction evidence="2">
        <text>ATP + H2O = ADP + phosphate + H(+)</text>
        <dbReference type="Rhea" id="RHEA:13065"/>
        <dbReference type="ChEBI" id="CHEBI:15377"/>
        <dbReference type="ChEBI" id="CHEBI:15378"/>
        <dbReference type="ChEBI" id="CHEBI:30616"/>
        <dbReference type="ChEBI" id="CHEBI:43474"/>
        <dbReference type="ChEBI" id="CHEBI:456216"/>
    </reaction>
</comment>
<comment type="subcellular location">
    <subcellularLocation>
        <location>Cytoplasm</location>
        <location>Cytoskeleton</location>
    </subcellularLocation>
</comment>
<comment type="similarity">
    <text evidence="3">Belongs to the actin family.</text>
</comment>
<proteinExistence type="inferred from homology"/>
<organism>
    <name type="scientific">Mesocentrotus franciscanus</name>
    <name type="common">Giant red sea urchin</name>
    <name type="synonym">Strongylocentrotus franciscanus</name>
    <dbReference type="NCBI Taxonomy" id="1328066"/>
    <lineage>
        <taxon>Eukaryota</taxon>
        <taxon>Metazoa</taxon>
        <taxon>Echinodermata</taxon>
        <taxon>Eleutherozoa</taxon>
        <taxon>Echinozoa</taxon>
        <taxon>Echinoidea</taxon>
        <taxon>Euechinoidea</taxon>
        <taxon>Echinacea</taxon>
        <taxon>Camarodonta</taxon>
        <taxon>Echinidea</taxon>
        <taxon>Strongylocentrotidae</taxon>
        <taxon>Mesocentrotus</taxon>
    </lineage>
</organism>
<evidence type="ECO:0000250" key="1"/>
<evidence type="ECO:0000250" key="2">
    <source>
        <dbReference type="UniProtKB" id="P68137"/>
    </source>
</evidence>
<evidence type="ECO:0000305" key="3"/>
<keyword id="KW-0007">Acetylation</keyword>
<keyword id="KW-0067">ATP-binding</keyword>
<keyword id="KW-0963">Cytoplasm</keyword>
<keyword id="KW-0206">Cytoskeleton</keyword>
<keyword id="KW-0378">Hydrolase</keyword>
<keyword id="KW-0547">Nucleotide-binding</keyword>